<feature type="chain" id="PRO_0000393473" description="T cell receptor delta constant">
    <location>
        <begin position="1" status="less than"/>
        <end position="153"/>
    </location>
</feature>
<feature type="transmembrane region" description="Helical" evidence="1">
    <location>
        <begin position="130"/>
        <end position="152"/>
    </location>
</feature>
<feature type="region of interest" description="Disordered" evidence="3">
    <location>
        <begin position="85"/>
        <end position="112"/>
    </location>
</feature>
<feature type="compositionally biased region" description="Basic and acidic residues" evidence="3">
    <location>
        <begin position="85"/>
        <end position="102"/>
    </location>
</feature>
<feature type="glycosylation site" description="N-linked (GlcNAc...) asparagine" evidence="2">
    <location>
        <position position="14"/>
    </location>
</feature>
<feature type="glycosylation site" description="N-linked (GlcNAc...) asparagine" evidence="2">
    <location>
        <position position="77"/>
    </location>
</feature>
<feature type="disulfide bond" evidence="4 12">
    <location>
        <begin position="20"/>
        <end position="71"/>
    </location>
</feature>
<feature type="non-terminal residue">
    <location>
        <position position="1"/>
    </location>
</feature>
<feature type="strand" evidence="14">
    <location>
        <begin position="9"/>
        <end position="27"/>
    </location>
</feature>
<feature type="strand" evidence="13">
    <location>
        <begin position="31"/>
        <end position="35"/>
    </location>
</feature>
<feature type="strand" evidence="14">
    <location>
        <begin position="37"/>
        <end position="39"/>
    </location>
</feature>
<feature type="strand" evidence="14">
    <location>
        <begin position="46"/>
        <end position="49"/>
    </location>
</feature>
<feature type="strand" evidence="14">
    <location>
        <begin position="53"/>
        <end position="65"/>
    </location>
</feature>
<feature type="helix" evidence="14">
    <location>
        <begin position="75"/>
        <end position="77"/>
    </location>
</feature>
<feature type="strand" evidence="13">
    <location>
        <begin position="78"/>
        <end position="81"/>
    </location>
</feature>
<feature type="turn" evidence="14">
    <location>
        <begin position="84"/>
        <end position="86"/>
    </location>
</feature>
<feature type="helix" evidence="15">
    <location>
        <begin position="122"/>
        <end position="151"/>
    </location>
</feature>
<evidence type="ECO:0000255" key="1"/>
<evidence type="ECO:0000255" key="2">
    <source>
        <dbReference type="PROSITE-ProRule" id="PRU00498"/>
    </source>
</evidence>
<evidence type="ECO:0000256" key="3">
    <source>
        <dbReference type="SAM" id="MobiDB-lite"/>
    </source>
</evidence>
<evidence type="ECO:0000269" key="4">
    <source>
    </source>
</evidence>
<evidence type="ECO:0000303" key="5">
    <source>
    </source>
</evidence>
<evidence type="ECO:0000303" key="6">
    <source>
    </source>
</evidence>
<evidence type="ECO:0000303" key="7">
    <source>
    </source>
</evidence>
<evidence type="ECO:0000303" key="8">
    <source>
    </source>
</evidence>
<evidence type="ECO:0000303" key="9">
    <source>
    </source>
</evidence>
<evidence type="ECO:0000303" key="10">
    <source ref="4"/>
</evidence>
<evidence type="ECO:0000305" key="11"/>
<evidence type="ECO:0007744" key="12">
    <source>
        <dbReference type="PDB" id="1HXM"/>
    </source>
</evidence>
<evidence type="ECO:0007829" key="13">
    <source>
        <dbReference type="PDB" id="1HXM"/>
    </source>
</evidence>
<evidence type="ECO:0007829" key="14">
    <source>
        <dbReference type="PDB" id="8JBV"/>
    </source>
</evidence>
<evidence type="ECO:0007829" key="15">
    <source>
        <dbReference type="PDB" id="8JC0"/>
    </source>
</evidence>
<accession>B7Z8K6</accession>
<reference key="1">
    <citation type="journal article" date="1988" name="Proc. Natl. Acad. Sci. U.S.A.">
        <title>Sequence and organization of the diversity, joining, and constant region genes of the human T-cell delta-chain locus.</title>
        <authorList>
            <person name="Takihara Y."/>
            <person name="Tkachuk D."/>
            <person name="Michalopoulos E."/>
            <person name="Champagne E."/>
            <person name="Reimann J."/>
            <person name="Minden M."/>
            <person name="Mak T.W."/>
        </authorList>
    </citation>
    <scope>NUCLEOTIDE SEQUENCE [GENOMIC DNA] (IMGT ALLELE TRDC*01)</scope>
</reference>
<reference key="2">
    <citation type="journal article" date="2004" name="Nat. Genet.">
        <title>Complete sequencing and characterization of 21,243 full-length human cDNAs.</title>
        <authorList>
            <person name="Ota T."/>
            <person name="Suzuki Y."/>
            <person name="Nishikawa T."/>
            <person name="Otsuki T."/>
            <person name="Sugiyama T."/>
            <person name="Irie R."/>
            <person name="Wakamatsu A."/>
            <person name="Hayashi K."/>
            <person name="Sato H."/>
            <person name="Nagai K."/>
            <person name="Kimura K."/>
            <person name="Makita H."/>
            <person name="Sekine M."/>
            <person name="Obayashi M."/>
            <person name="Nishi T."/>
            <person name="Shibahara T."/>
            <person name="Tanaka T."/>
            <person name="Ishii S."/>
            <person name="Yamamoto J."/>
            <person name="Saito K."/>
            <person name="Kawai Y."/>
            <person name="Isono Y."/>
            <person name="Nakamura Y."/>
            <person name="Nagahari K."/>
            <person name="Murakami K."/>
            <person name="Yasuda T."/>
            <person name="Iwayanagi T."/>
            <person name="Wagatsuma M."/>
            <person name="Shiratori A."/>
            <person name="Sudo H."/>
            <person name="Hosoiri T."/>
            <person name="Kaku Y."/>
            <person name="Kodaira H."/>
            <person name="Kondo H."/>
            <person name="Sugawara M."/>
            <person name="Takahashi M."/>
            <person name="Kanda K."/>
            <person name="Yokoi T."/>
            <person name="Furuya T."/>
            <person name="Kikkawa E."/>
            <person name="Omura Y."/>
            <person name="Abe K."/>
            <person name="Kamihara K."/>
            <person name="Katsuta N."/>
            <person name="Sato K."/>
            <person name="Tanikawa M."/>
            <person name="Yamazaki M."/>
            <person name="Ninomiya K."/>
            <person name="Ishibashi T."/>
            <person name="Yamashita H."/>
            <person name="Murakawa K."/>
            <person name="Fujimori K."/>
            <person name="Tanai H."/>
            <person name="Kimata M."/>
            <person name="Watanabe M."/>
            <person name="Hiraoka S."/>
            <person name="Chiba Y."/>
            <person name="Ishida S."/>
            <person name="Ono Y."/>
            <person name="Takiguchi S."/>
            <person name="Watanabe S."/>
            <person name="Yosida M."/>
            <person name="Hotuta T."/>
            <person name="Kusano J."/>
            <person name="Kanehori K."/>
            <person name="Takahashi-Fujii A."/>
            <person name="Hara H."/>
            <person name="Tanase T.-O."/>
            <person name="Nomura Y."/>
            <person name="Togiya S."/>
            <person name="Komai F."/>
            <person name="Hara R."/>
            <person name="Takeuchi K."/>
            <person name="Arita M."/>
            <person name="Imose N."/>
            <person name="Musashino K."/>
            <person name="Yuuki H."/>
            <person name="Oshima A."/>
            <person name="Sasaki N."/>
            <person name="Aotsuka S."/>
            <person name="Yoshikawa Y."/>
            <person name="Matsunawa H."/>
            <person name="Ichihara T."/>
            <person name="Shiohata N."/>
            <person name="Sano S."/>
            <person name="Moriya S."/>
            <person name="Momiyama H."/>
            <person name="Satoh N."/>
            <person name="Takami S."/>
            <person name="Terashima Y."/>
            <person name="Suzuki O."/>
            <person name="Nakagawa S."/>
            <person name="Senoh A."/>
            <person name="Mizoguchi H."/>
            <person name="Goto Y."/>
            <person name="Shimizu F."/>
            <person name="Wakebe H."/>
            <person name="Hishigaki H."/>
            <person name="Watanabe T."/>
            <person name="Sugiyama A."/>
            <person name="Takemoto M."/>
            <person name="Kawakami B."/>
            <person name="Yamazaki M."/>
            <person name="Watanabe K."/>
            <person name="Kumagai A."/>
            <person name="Itakura S."/>
            <person name="Fukuzumi Y."/>
            <person name="Fujimori Y."/>
            <person name="Komiyama M."/>
            <person name="Tashiro H."/>
            <person name="Tanigami A."/>
            <person name="Fujiwara T."/>
            <person name="Ono T."/>
            <person name="Yamada K."/>
            <person name="Fujii Y."/>
            <person name="Ozaki K."/>
            <person name="Hirao M."/>
            <person name="Ohmori Y."/>
            <person name="Kawabata A."/>
            <person name="Hikiji T."/>
            <person name="Kobatake N."/>
            <person name="Inagaki H."/>
            <person name="Ikema Y."/>
            <person name="Okamoto S."/>
            <person name="Okitani R."/>
            <person name="Kawakami T."/>
            <person name="Noguchi S."/>
            <person name="Itoh T."/>
            <person name="Shigeta K."/>
            <person name="Senba T."/>
            <person name="Matsumura K."/>
            <person name="Nakajima Y."/>
            <person name="Mizuno T."/>
            <person name="Morinaga M."/>
            <person name="Sasaki M."/>
            <person name="Togashi T."/>
            <person name="Oyama M."/>
            <person name="Hata H."/>
            <person name="Watanabe M."/>
            <person name="Komatsu T."/>
            <person name="Mizushima-Sugano J."/>
            <person name="Satoh T."/>
            <person name="Shirai Y."/>
            <person name="Takahashi Y."/>
            <person name="Nakagawa K."/>
            <person name="Okumura K."/>
            <person name="Nagase T."/>
            <person name="Nomura N."/>
            <person name="Kikuchi H."/>
            <person name="Masuho Y."/>
            <person name="Yamashita R."/>
            <person name="Nakai K."/>
            <person name="Yada T."/>
            <person name="Nakamura Y."/>
            <person name="Ohara O."/>
            <person name="Isogai T."/>
            <person name="Sugano S."/>
        </authorList>
    </citation>
    <scope>NUCLEOTIDE SEQUENCE [LARGE SCALE MRNA] (IMGT ALLELE TRDC*01)</scope>
    <source>
        <tissue>Thymus</tissue>
    </source>
</reference>
<reference key="3">
    <citation type="journal article" date="2003" name="Nature">
        <title>The DNA sequence and analysis of human chromosome 14.</title>
        <authorList>
            <person name="Heilig R."/>
            <person name="Eckenberg R."/>
            <person name="Petit J.-L."/>
            <person name="Fonknechten N."/>
            <person name="Da Silva C."/>
            <person name="Cattolico L."/>
            <person name="Levy M."/>
            <person name="Barbe V."/>
            <person name="De Berardinis V."/>
            <person name="Ureta-Vidal A."/>
            <person name="Pelletier E."/>
            <person name="Vico V."/>
            <person name="Anthouard V."/>
            <person name="Rowen L."/>
            <person name="Madan A."/>
            <person name="Qin S."/>
            <person name="Sun H."/>
            <person name="Du H."/>
            <person name="Pepin K."/>
            <person name="Artiguenave F."/>
            <person name="Robert C."/>
            <person name="Cruaud C."/>
            <person name="Bruels T."/>
            <person name="Jaillon O."/>
            <person name="Friedlander L."/>
            <person name="Samson G."/>
            <person name="Brottier P."/>
            <person name="Cure S."/>
            <person name="Segurens B."/>
            <person name="Aniere F."/>
            <person name="Samain S."/>
            <person name="Crespeau H."/>
            <person name="Abbasi N."/>
            <person name="Aiach N."/>
            <person name="Boscus D."/>
            <person name="Dickhoff R."/>
            <person name="Dors M."/>
            <person name="Dubois I."/>
            <person name="Friedman C."/>
            <person name="Gouyvenoux M."/>
            <person name="James R."/>
            <person name="Madan A."/>
            <person name="Mairey-Estrada B."/>
            <person name="Mangenot S."/>
            <person name="Martins N."/>
            <person name="Menard M."/>
            <person name="Oztas S."/>
            <person name="Ratcliffe A."/>
            <person name="Shaffer T."/>
            <person name="Trask B."/>
            <person name="Vacherie B."/>
            <person name="Bellemere C."/>
            <person name="Belser C."/>
            <person name="Besnard-Gonnet M."/>
            <person name="Bartol-Mavel D."/>
            <person name="Boutard M."/>
            <person name="Briez-Silla S."/>
            <person name="Combette S."/>
            <person name="Dufosse-Laurent V."/>
            <person name="Ferron C."/>
            <person name="Lechaplais C."/>
            <person name="Louesse C."/>
            <person name="Muselet D."/>
            <person name="Magdelenat G."/>
            <person name="Pateau E."/>
            <person name="Petit E."/>
            <person name="Sirvain-Trukniewicz P."/>
            <person name="Trybou A."/>
            <person name="Vega-Czarny N."/>
            <person name="Bataille E."/>
            <person name="Bluet E."/>
            <person name="Bordelais I."/>
            <person name="Dubois M."/>
            <person name="Dumont C."/>
            <person name="Guerin T."/>
            <person name="Haffray S."/>
            <person name="Hammadi R."/>
            <person name="Muanga J."/>
            <person name="Pellouin V."/>
            <person name="Robert D."/>
            <person name="Wunderle E."/>
            <person name="Gauguet G."/>
            <person name="Roy A."/>
            <person name="Sainte-Marthe L."/>
            <person name="Verdier J."/>
            <person name="Verdier-Discala C."/>
            <person name="Hillier L.W."/>
            <person name="Fulton L."/>
            <person name="McPherson J."/>
            <person name="Matsuda F."/>
            <person name="Wilson R."/>
            <person name="Scarpelli C."/>
            <person name="Gyapay G."/>
            <person name="Wincker P."/>
            <person name="Saurin W."/>
            <person name="Quetier F."/>
            <person name="Waterston R."/>
            <person name="Hood L."/>
            <person name="Weissenbach J."/>
        </authorList>
    </citation>
    <scope>NUCLEOTIDE SEQUENCE [LARGE SCALE GENOMIC DNA] (IMGT ALLELE TRDC*01)</scope>
</reference>
<reference key="4">
    <citation type="book" date="2001" name="The T Cell Receptor FactsBook.">
        <title>The T Cell Receptor FactsBook.</title>
        <editorList>
            <person name="Lefranc M.P."/>
            <person name="Lefranc G."/>
        </editorList>
        <authorList>
            <person name="Lefranc M.P."/>
            <person name="Lefranc G."/>
        </authorList>
    </citation>
    <scope>NOMENCLATURE</scope>
</reference>
<reference key="5">
    <citation type="journal article" date="2013" name="Nat. Rev. Immunol.">
        <title>Six-of-the-best: unique contributions of gammadelta T cells to immunology.</title>
        <authorList>
            <person name="Vantourout P."/>
            <person name="Hayday A."/>
        </authorList>
    </citation>
    <scope>REVIEW ON FUNCTION AND ANTIGEN RECOGNITION</scope>
</reference>
<reference key="6">
    <citation type="journal article" date="2014" name="Annu. Rev. Immunol.">
        <title>gammadelta T cells: first line of defense and beyond.</title>
        <authorList>
            <person name="Chien Y.H."/>
            <person name="Meyer C."/>
            <person name="Bonneville M."/>
        </authorList>
    </citation>
    <scope>REVIEW ON GAMMA DELTA T CELL RECEPTOR DIVERSITY</scope>
</reference>
<reference key="7">
    <citation type="journal article" date="2014" name="Front. Immunol.">
        <title>Immunoglobulin and T Cell Receptor Genes: IMGT((R)) and the Birth and Rise of Immunoinformatics.</title>
        <authorList>
            <person name="Lefranc M.P."/>
        </authorList>
    </citation>
    <scope>NOMENCLATURE</scope>
</reference>
<reference key="8">
    <citation type="journal article" date="2015" name="Front. Immunol.">
        <title>Five Layers of Receptor Signaling in gammadelta T-Cell Differentiation and Activation.</title>
        <authorList>
            <person name="Ribeiro S.T."/>
            <person name="Ribot J.C."/>
            <person name="Silva-Santos B."/>
        </authorList>
    </citation>
    <scope>REVIEW ON T CELL RECEPTOR SIGNALING</scope>
    <scope>SUBUNIT</scope>
</reference>
<reference key="9">
    <citation type="journal article" date="2017" name="Nat. Rev. Immunol.">
        <title>gammadelta T cells in homeostasis and host defence of epithelial barrier tissues.</title>
        <authorList>
            <person name="Nielsen M.M."/>
            <person name="Witherden D.A."/>
            <person name="Havran W.L."/>
        </authorList>
    </citation>
    <scope>REVIEW ON FUNCTION</scope>
</reference>
<reference evidence="12" key="10">
    <citation type="journal article" date="2001" name="Nature">
        <title>Structure of a human gammadelta T-cell antigen receptor.</title>
        <authorList>
            <person name="Allison T.J."/>
            <person name="Winter C.C."/>
            <person name="Fournie J.-J."/>
            <person name="Bonneville M."/>
            <person name="Garboczi D.N."/>
        </authorList>
    </citation>
    <scope>X-RAY CRYSTALLOGRAPHY (3.12 ANGSTROMS) OF 1-109</scope>
    <scope>DISULFIDE BONDS</scope>
</reference>
<keyword id="KW-0002">3D-structure</keyword>
<keyword id="KW-1064">Adaptive immunity</keyword>
<keyword id="KW-1003">Cell membrane</keyword>
<keyword id="KW-1015">Disulfide bond</keyword>
<keyword id="KW-0325">Glycoprotein</keyword>
<keyword id="KW-0391">Immunity</keyword>
<keyword id="KW-0472">Membrane</keyword>
<keyword id="KW-1267">Proteomics identification</keyword>
<keyword id="KW-0675">Receptor</keyword>
<keyword id="KW-1185">Reference proteome</keyword>
<keyword id="KW-1279">T cell receptor</keyword>
<keyword id="KW-0812">Transmembrane</keyword>
<keyword id="KW-1133">Transmembrane helix</keyword>
<organism>
    <name type="scientific">Homo sapiens</name>
    <name type="common">Human</name>
    <dbReference type="NCBI Taxonomy" id="9606"/>
    <lineage>
        <taxon>Eukaryota</taxon>
        <taxon>Metazoa</taxon>
        <taxon>Chordata</taxon>
        <taxon>Craniata</taxon>
        <taxon>Vertebrata</taxon>
        <taxon>Euteleostomi</taxon>
        <taxon>Mammalia</taxon>
        <taxon>Eutheria</taxon>
        <taxon>Euarchontoglires</taxon>
        <taxon>Primates</taxon>
        <taxon>Haplorrhini</taxon>
        <taxon>Catarrhini</taxon>
        <taxon>Hominidae</taxon>
        <taxon>Homo</taxon>
    </lineage>
</organism>
<gene>
    <name evidence="10" type="primary">TRDC</name>
</gene>
<proteinExistence type="evidence at protein level"/>
<protein>
    <recommendedName>
        <fullName evidence="10">T cell receptor delta constant</fullName>
    </recommendedName>
</protein>
<name>TRDC_HUMAN</name>
<comment type="function">
    <text evidence="5 6 7 8 9">Constant region of T cell receptor (TR) delta chain that participates in the antigen recognition (PubMed:24600447). Gamma-delta TRs recognize a variety of self and foreign non-peptide antigens frequently expressed at the epithelial boundaries between the host and external environment, including endogenous lipids presented by MH-like protein CD1D and phosphoantigens presented by butyrophilin-like molecule BTN3A1. Upon antigen recognition induces rapid, innate-like immune responses involved in pathogen clearance and tissue repair (PubMed:23348415, PubMed:28920588). Binding of gamma-delta TR complex to antigen triggers phosphorylation of immunoreceptor tyrosine-based activation motifs (ITAMs) in the CD3 chains by the LCK and FYN kinases, allowing the recruitment, phosphorylation, and activation of ZAP70 that facilitates phosphorylation of the scaffolding proteins LCP2 and LAT. This lead to the formation of a supramolecular signalosome that recruits the phospholipase PLCG1, resulting in calcium mobilization and ERK activation, ultimately leading to T cell expansion and differentiation into effector cells (PubMed:25674089). Gamma-delta TRs are produced through somatic rearrangement of a limited repertoire of variable (V), diversity (D), and joining (J) genes. The potential diversity of gamma-delta TRs is conferred by the unique ability to rearrange (D) genes in tandem and to utilize all three reading frames. The combinatorial diversity is considerably increased by the sequence exonuclease trimming and random nucleotide (N) region additions which occur during the V-(D)-J rearrangements (PubMed:24387714).</text>
</comment>
<comment type="subunit">
    <text evidence="8">Gamma-delta TR is a heterodimer composed of a gamma and delta chain; disulfide-linked. The gamma-delta TR is associated with the transmembrane signaling CD3 coreceptor proteins following the stoichiometry: a single gamma-delta TR heterodimer associates with one CD3D-CD3E heterodimer, one CD3G-CD3E heterodimer and one CD247 homodimer forming a stable octameric structure. Upon activation, gamma-delta TR complex associates with FCER1G to initiate intracellular signaling.</text>
</comment>
<comment type="subcellular location">
    <subcellularLocation>
        <location evidence="11">Cell membrane</location>
    </subcellularLocation>
</comment>
<comment type="polymorphism">
    <text evidence="11">There are several alleles. The sequence shown is that of IMGT allele TRDC*01.</text>
</comment>
<comment type="sequence caution" evidence="11">
    <conflict type="erroneous initiation">
        <sequence resource="EMBL-CDS" id="AAA61033"/>
    </conflict>
    <text>Extended N-terminus.</text>
</comment>
<comment type="sequence caution" evidence="11">
    <conflict type="erroneous initiation">
        <sequence resource="EMBL-CDS" id="BAH13992"/>
    </conflict>
    <text>Truncated N-terminus.</text>
</comment>
<sequence>SQPHTKPSVFVMKNGTNVACLVKEFYPKDIRINLVSSKKITEFDPAIVISPSGKYNAVKLGKYEDSNSVTCSVQHDNKTVHSTDFEVKTDSTDHVKPKETENTKQPSKSCHKPKAIVHTEKVNMMSLTVLGLRMLFAKTVAVNFLLTAKLFFL</sequence>
<dbReference type="EMBL" id="M22150">
    <property type="protein sequence ID" value="AAA61033.1"/>
    <property type="status" value="ALT_INIT"/>
    <property type="molecule type" value="Genomic_DNA"/>
</dbReference>
<dbReference type="EMBL" id="M22148">
    <property type="protein sequence ID" value="AAA61033.1"/>
    <property type="status" value="JOINED"/>
    <property type="molecule type" value="Genomic_DNA"/>
</dbReference>
<dbReference type="EMBL" id="M22149">
    <property type="protein sequence ID" value="AAA61033.1"/>
    <property type="status" value="JOINED"/>
    <property type="molecule type" value="Genomic_DNA"/>
</dbReference>
<dbReference type="EMBL" id="AK303587">
    <property type="protein sequence ID" value="BAH13992.1"/>
    <property type="status" value="ALT_INIT"/>
    <property type="molecule type" value="mRNA"/>
</dbReference>
<dbReference type="EMBL" id="AC244502">
    <property type="status" value="NOT_ANNOTATED_CDS"/>
    <property type="molecule type" value="Genomic_DNA"/>
</dbReference>
<dbReference type="PDB" id="1HXM">
    <property type="method" value="X-ray"/>
    <property type="resolution" value="3.12 A"/>
    <property type="chains" value="A/C/E/G=1-109"/>
</dbReference>
<dbReference type="PDB" id="8JBV">
    <property type="method" value="EM"/>
    <property type="resolution" value="3.02 A"/>
    <property type="chains" value="M/m=1-153"/>
</dbReference>
<dbReference type="PDB" id="8JC0">
    <property type="method" value="EM"/>
    <property type="resolution" value="3.40 A"/>
    <property type="chains" value="m=1-153"/>
</dbReference>
<dbReference type="PDB" id="8JCB">
    <property type="method" value="EM"/>
    <property type="resolution" value="9.50 A"/>
    <property type="chains" value="M/m=1-153"/>
</dbReference>
<dbReference type="PDB" id="8WXE">
    <property type="method" value="EM"/>
    <property type="resolution" value="4.00 A"/>
    <property type="chains" value="m=1-153"/>
</dbReference>
<dbReference type="PDB" id="8WY0">
    <property type="method" value="EM"/>
    <property type="resolution" value="3.80 A"/>
    <property type="chains" value="m=1-153"/>
</dbReference>
<dbReference type="PDB" id="8WYI">
    <property type="method" value="EM"/>
    <property type="resolution" value="3.90 A"/>
    <property type="chains" value="m=1-133"/>
</dbReference>
<dbReference type="PDB" id="8YC0">
    <property type="method" value="EM"/>
    <property type="resolution" value="4.12 A"/>
    <property type="chains" value="m=1-153"/>
</dbReference>
<dbReference type="PDB" id="9CI8">
    <property type="method" value="EM"/>
    <property type="resolution" value="3.01 A"/>
    <property type="chains" value="m=118-153"/>
</dbReference>
<dbReference type="PDB" id="9CIA">
    <property type="method" value="EM"/>
    <property type="resolution" value="3.39 A"/>
    <property type="chains" value="m=118-152"/>
</dbReference>
<dbReference type="PDBsum" id="1HXM"/>
<dbReference type="PDBsum" id="8JBV"/>
<dbReference type="PDBsum" id="8JC0"/>
<dbReference type="PDBsum" id="8JCB"/>
<dbReference type="PDBsum" id="8WXE"/>
<dbReference type="PDBsum" id="8WY0"/>
<dbReference type="PDBsum" id="8WYI"/>
<dbReference type="PDBsum" id="8YC0"/>
<dbReference type="PDBsum" id="9CI8"/>
<dbReference type="PDBsum" id="9CIA"/>
<dbReference type="EMDB" id="EMD-36147"/>
<dbReference type="EMDB" id="EMD-36149"/>
<dbReference type="EMDB" id="EMD-36156"/>
<dbReference type="EMDB" id="EMD-37904"/>
<dbReference type="EMDB" id="EMD-37914"/>
<dbReference type="EMDB" id="EMD-39128"/>
<dbReference type="SMR" id="B7Z8K6"/>
<dbReference type="ComplexPortal" id="CPX-6582">
    <property type="entry name" value="Gamma-delta T cell receptor complex, TRGC1 variant"/>
</dbReference>
<dbReference type="ComplexPortal" id="CPX-6603">
    <property type="entry name" value="Gamma-delta T cell receptor complex, TRGC2 variant"/>
</dbReference>
<dbReference type="FunCoup" id="B7Z8K6">
    <property type="interactions" value="12"/>
</dbReference>
<dbReference type="IMGT_GENE-DB" id="TRDC"/>
<dbReference type="GlyCosmos" id="B7Z8K6">
    <property type="glycosylation" value="2 sites, No reported glycans"/>
</dbReference>
<dbReference type="GlyGen" id="B7Z8K6">
    <property type="glycosylation" value="2 sites"/>
</dbReference>
<dbReference type="BioMuta" id="TRDC"/>
<dbReference type="MassIVE" id="B7Z8K6"/>
<dbReference type="ProteomicsDB" id="6955"/>
<dbReference type="AGR" id="HGNC:12253"/>
<dbReference type="GeneCards" id="TRDC"/>
<dbReference type="HGNC" id="HGNC:12253">
    <property type="gene designation" value="TRDC"/>
</dbReference>
<dbReference type="HPA" id="ENSG00000211829">
    <property type="expression patterns" value="Tissue enriched (lymphoid)"/>
</dbReference>
<dbReference type="MalaCards" id="TRDC"/>
<dbReference type="MIM" id="186810">
    <property type="type" value="gene"/>
</dbReference>
<dbReference type="neXtProt" id="NX_B7Z8K6"/>
<dbReference type="InParanoid" id="B7Z8K6"/>
<dbReference type="OMA" id="PITANVC"/>
<dbReference type="OrthoDB" id="9945861at2759"/>
<dbReference type="PAN-GO" id="B7Z8K6">
    <property type="GO annotations" value="11 GO annotations based on evolutionary models"/>
</dbReference>
<dbReference type="PhylomeDB" id="B7Z8K6"/>
<dbReference type="PathwayCommons" id="B7Z8K6"/>
<dbReference type="ChiTaRS" id="TRDC">
    <property type="organism name" value="human"/>
</dbReference>
<dbReference type="EvolutionaryTrace" id="B7Z8K6"/>
<dbReference type="Pharos" id="B7Z8K6">
    <property type="development level" value="Tdark"/>
</dbReference>
<dbReference type="PRO" id="PR:B7Z8K6"/>
<dbReference type="Proteomes" id="UP000005640">
    <property type="component" value="Unplaced"/>
</dbReference>
<dbReference type="RNAct" id="B7Z8K6">
    <property type="molecule type" value="protein"/>
</dbReference>
<dbReference type="GO" id="GO:0042106">
    <property type="term" value="C:gamma-delta T cell receptor complex"/>
    <property type="evidence" value="ECO:0000303"/>
    <property type="project" value="ComplexPortal"/>
</dbReference>
<dbReference type="GO" id="GO:0005886">
    <property type="term" value="C:plasma membrane"/>
    <property type="evidence" value="ECO:0000303"/>
    <property type="project" value="ComplexPortal"/>
</dbReference>
<dbReference type="GO" id="GO:0002250">
    <property type="term" value="P:adaptive immune response"/>
    <property type="evidence" value="ECO:0000303"/>
    <property type="project" value="ComplexPortal"/>
</dbReference>
<dbReference type="GO" id="GO:0046629">
    <property type="term" value="P:gamma-delta T cell activation"/>
    <property type="evidence" value="ECO:0000303"/>
    <property type="project" value="ComplexPortal"/>
</dbReference>
<dbReference type="GO" id="GO:0050852">
    <property type="term" value="P:T cell receptor signaling pathway"/>
    <property type="evidence" value="ECO:0000303"/>
    <property type="project" value="ComplexPortal"/>
</dbReference>
<dbReference type="CDD" id="cd07687">
    <property type="entry name" value="IgC_TCR_delta"/>
    <property type="match status" value="1"/>
</dbReference>
<dbReference type="FunFam" id="2.60.40.10:FF:001810">
    <property type="entry name" value="T cell receptor delta constant"/>
    <property type="match status" value="1"/>
</dbReference>
<dbReference type="Gene3D" id="2.60.40.10">
    <property type="entry name" value="Immunoglobulins"/>
    <property type="match status" value="1"/>
</dbReference>
<dbReference type="InterPro" id="IPR051755">
    <property type="entry name" value="Ig-like_CS_Receptor"/>
</dbReference>
<dbReference type="InterPro" id="IPR036179">
    <property type="entry name" value="Ig-like_dom_sf"/>
</dbReference>
<dbReference type="InterPro" id="IPR013783">
    <property type="entry name" value="Ig-like_fold"/>
</dbReference>
<dbReference type="InterPro" id="IPR003597">
    <property type="entry name" value="Ig_C1-set"/>
</dbReference>
<dbReference type="PANTHER" id="PTHR19971">
    <property type="entry name" value="SIGNAL-REGULATORY PROTEIN BETA"/>
    <property type="match status" value="1"/>
</dbReference>
<dbReference type="Pfam" id="PF07654">
    <property type="entry name" value="C1-set"/>
    <property type="match status" value="1"/>
</dbReference>
<dbReference type="SUPFAM" id="SSF48726">
    <property type="entry name" value="Immunoglobulin"/>
    <property type="match status" value="1"/>
</dbReference>